<comment type="similarity">
    <text evidence="1">Belongs to the proline racemase family.</text>
</comment>
<comment type="caution">
    <text evidence="1">This protein does not possess neither proline racemase nor hydroxyproline-2-epimerase activities.</text>
</comment>
<organism>
    <name type="scientific">Brucella abortus biovar 1 (strain 9-941)</name>
    <dbReference type="NCBI Taxonomy" id="262698"/>
    <lineage>
        <taxon>Bacteria</taxon>
        <taxon>Pseudomonadati</taxon>
        <taxon>Pseudomonadota</taxon>
        <taxon>Alphaproteobacteria</taxon>
        <taxon>Hyphomicrobiales</taxon>
        <taxon>Brucellaceae</taxon>
        <taxon>Brucella/Ochrobactrum group</taxon>
        <taxon>Brucella</taxon>
    </lineage>
</organism>
<sequence length="342" mass="36941">MRSTKVIHIVGCHAEGEVGDVIVGGVAPPPGETVWEQSRFIANDETLRNFVLNEPRGGVFRHVNLLVPPKDPRAQMGFIIMEPADTPPMSGSNSICVSTVLLDSGIIAMQEPVTHMVLEAPGGIIEVEAECRNGKAERISVRNVPSFADRLDAPLDVTGLGTIMVDTAYGGDSFVIVDAAQIGMKIEPGQARELAEIGVKITKAANEQLGFRHPERDWRHISFCQITEPVTREGDVLTGVNTVAIRPAKLDRSPTGTGCSARMAVLHAKGQMKAGERFIGKSVLGTEFHCRLDKVLELGGKPAISPIISGRAWVTGTSQLMLDPSDPFPHGYRLSDTWPRDE</sequence>
<evidence type="ECO:0000305" key="1"/>
<dbReference type="EMBL" id="AE017223">
    <property type="protein sequence ID" value="AAX73762.1"/>
    <property type="molecule type" value="Genomic_DNA"/>
</dbReference>
<dbReference type="RefSeq" id="WP_002966688.1">
    <property type="nucleotide sequence ID" value="NC_006932.1"/>
</dbReference>
<dbReference type="SMR" id="Q57F22"/>
<dbReference type="EnsemblBacteria" id="AAX73762">
    <property type="protein sequence ID" value="AAX73762"/>
    <property type="gene ID" value="BruAb1_0363"/>
</dbReference>
<dbReference type="KEGG" id="bmb:BruAb1_0363"/>
<dbReference type="HOGENOM" id="CLU_036729_2_0_5"/>
<dbReference type="Proteomes" id="UP000000540">
    <property type="component" value="Chromosome I"/>
</dbReference>
<dbReference type="GO" id="GO:0047580">
    <property type="term" value="F:4-hydroxyproline epimerase activity"/>
    <property type="evidence" value="ECO:0007669"/>
    <property type="project" value="TreeGrafter"/>
</dbReference>
<dbReference type="GO" id="GO:0050346">
    <property type="term" value="F:trans-L-3-hydroxyproline dehydratase activity"/>
    <property type="evidence" value="ECO:0007669"/>
    <property type="project" value="UniProtKB-ARBA"/>
</dbReference>
<dbReference type="FunFam" id="3.10.310.10:FF:000010">
    <property type="entry name" value="Proline racemase"/>
    <property type="match status" value="1"/>
</dbReference>
<dbReference type="Gene3D" id="3.10.310.10">
    <property type="entry name" value="Diaminopimelate Epimerase, Chain A, domain 1"/>
    <property type="match status" value="2"/>
</dbReference>
<dbReference type="InterPro" id="IPR008794">
    <property type="entry name" value="Pro_racemase_fam"/>
</dbReference>
<dbReference type="NCBIfam" id="NF047722">
    <property type="entry name" value="T3LHypDht"/>
    <property type="match status" value="1"/>
</dbReference>
<dbReference type="PANTHER" id="PTHR33442:SF5">
    <property type="entry name" value="BIFUNCTIONAL TRANS-3-HYDROXY-L-PROLINE DEHYDRATASE_2-EPIMERASE"/>
    <property type="match status" value="1"/>
</dbReference>
<dbReference type="PANTHER" id="PTHR33442">
    <property type="entry name" value="TRANS-3-HYDROXY-L-PROLINE DEHYDRATASE"/>
    <property type="match status" value="1"/>
</dbReference>
<dbReference type="Pfam" id="PF05544">
    <property type="entry name" value="Pro_racemase"/>
    <property type="match status" value="1"/>
</dbReference>
<dbReference type="PIRSF" id="PIRSF029792">
    <property type="entry name" value="Pro_racemase"/>
    <property type="match status" value="1"/>
</dbReference>
<dbReference type="SFLD" id="SFLDS00028">
    <property type="entry name" value="Proline_Racemase"/>
    <property type="match status" value="1"/>
</dbReference>
<dbReference type="SUPFAM" id="SSF54506">
    <property type="entry name" value="Diaminopimelate epimerase-like"/>
    <property type="match status" value="1"/>
</dbReference>
<protein>
    <recommendedName>
        <fullName>Uncharacterized protein BruAb1_0363</fullName>
    </recommendedName>
</protein>
<reference key="1">
    <citation type="journal article" date="2005" name="J. Bacteriol.">
        <title>Completion of the genome sequence of Brucella abortus and comparison to the highly similar genomes of Brucella melitensis and Brucella suis.</title>
        <authorList>
            <person name="Halling S.M."/>
            <person name="Peterson-Burch B.D."/>
            <person name="Bricker B.J."/>
            <person name="Zuerner R.L."/>
            <person name="Qing Z."/>
            <person name="Li L.-L."/>
            <person name="Kapur V."/>
            <person name="Alt D.P."/>
            <person name="Olsen S.C."/>
        </authorList>
    </citation>
    <scope>NUCLEOTIDE SEQUENCE [LARGE SCALE GENOMIC DNA]</scope>
    <source>
        <strain>9-941</strain>
    </source>
</reference>
<reference key="2">
    <citation type="journal article" date="2007" name="PLoS ONE">
        <title>Molecular and structural discrimination of proline racemase and hydroxyproline-2-epimerase from nosocomial and bacterial pathogens.</title>
        <authorList>
            <person name="Goytia M."/>
            <person name="Chamond N."/>
            <person name="Cosson A."/>
            <person name="Coatnoan N."/>
            <person name="Hermant D."/>
            <person name="Berneman A."/>
            <person name="Minoprio P."/>
        </authorList>
    </citation>
    <scope>LACK OF ENZYMATIC ACTIVITY AS PROLINE RACEMASE AND HYDROXYPROLINE-2-EPIMERASE</scope>
    <source>
        <strain>544 / Biovar 1</strain>
    </source>
</reference>
<accession>Q57F22</accession>
<feature type="chain" id="PRO_0000354040" description="Uncharacterized protein BruAb1_0363">
    <location>
        <begin position="1"/>
        <end position="342"/>
    </location>
</feature>
<name>Y363_BRUAB</name>
<gene>
    <name type="ordered locus">BruAb1_0363</name>
</gene>
<proteinExistence type="evidence at protein level"/>